<feature type="chain" id="PRO_0000137943" description="Glycerol-3-phosphate dehydrogenase [NAD(P)+]">
    <location>
        <begin position="1"/>
        <end position="334"/>
    </location>
</feature>
<feature type="active site" description="Proton acceptor" evidence="1">
    <location>
        <position position="192"/>
    </location>
</feature>
<feature type="binding site" evidence="1">
    <location>
        <position position="13"/>
    </location>
    <ligand>
        <name>NADPH</name>
        <dbReference type="ChEBI" id="CHEBI:57783"/>
    </ligand>
</feature>
<feature type="binding site" evidence="1">
    <location>
        <position position="33"/>
    </location>
    <ligand>
        <name>NADPH</name>
        <dbReference type="ChEBI" id="CHEBI:57783"/>
    </ligand>
</feature>
<feature type="binding site" evidence="1">
    <location>
        <position position="106"/>
    </location>
    <ligand>
        <name>NADPH</name>
        <dbReference type="ChEBI" id="CHEBI:57783"/>
    </ligand>
</feature>
<feature type="binding site" evidence="1">
    <location>
        <position position="106"/>
    </location>
    <ligand>
        <name>sn-glycerol 3-phosphate</name>
        <dbReference type="ChEBI" id="CHEBI:57597"/>
    </ligand>
</feature>
<feature type="binding site" evidence="1">
    <location>
        <position position="137"/>
    </location>
    <ligand>
        <name>sn-glycerol 3-phosphate</name>
        <dbReference type="ChEBI" id="CHEBI:57597"/>
    </ligand>
</feature>
<feature type="binding site" evidence="1">
    <location>
        <position position="139"/>
    </location>
    <ligand>
        <name>sn-glycerol 3-phosphate</name>
        <dbReference type="ChEBI" id="CHEBI:57597"/>
    </ligand>
</feature>
<feature type="binding site" evidence="1">
    <location>
        <position position="141"/>
    </location>
    <ligand>
        <name>NADPH</name>
        <dbReference type="ChEBI" id="CHEBI:57783"/>
    </ligand>
</feature>
<feature type="binding site" evidence="1">
    <location>
        <position position="192"/>
    </location>
    <ligand>
        <name>sn-glycerol 3-phosphate</name>
        <dbReference type="ChEBI" id="CHEBI:57597"/>
    </ligand>
</feature>
<feature type="binding site" evidence="1">
    <location>
        <position position="245"/>
    </location>
    <ligand>
        <name>sn-glycerol 3-phosphate</name>
        <dbReference type="ChEBI" id="CHEBI:57597"/>
    </ligand>
</feature>
<feature type="binding site" evidence="1">
    <location>
        <position position="255"/>
    </location>
    <ligand>
        <name>sn-glycerol 3-phosphate</name>
        <dbReference type="ChEBI" id="CHEBI:57597"/>
    </ligand>
</feature>
<feature type="binding site" evidence="1">
    <location>
        <position position="256"/>
    </location>
    <ligand>
        <name>NADPH</name>
        <dbReference type="ChEBI" id="CHEBI:57783"/>
    </ligand>
</feature>
<feature type="binding site" evidence="1">
    <location>
        <position position="256"/>
    </location>
    <ligand>
        <name>sn-glycerol 3-phosphate</name>
        <dbReference type="ChEBI" id="CHEBI:57597"/>
    </ligand>
</feature>
<feature type="binding site" evidence="1">
    <location>
        <position position="257"/>
    </location>
    <ligand>
        <name>sn-glycerol 3-phosphate</name>
        <dbReference type="ChEBI" id="CHEBI:57597"/>
    </ligand>
</feature>
<feature type="binding site" evidence="1">
    <location>
        <position position="280"/>
    </location>
    <ligand>
        <name>NADPH</name>
        <dbReference type="ChEBI" id="CHEBI:57783"/>
    </ligand>
</feature>
<feature type="binding site" evidence="1">
    <location>
        <position position="282"/>
    </location>
    <ligand>
        <name>NADPH</name>
        <dbReference type="ChEBI" id="CHEBI:57783"/>
    </ligand>
</feature>
<dbReference type="EC" id="1.1.1.94" evidence="1"/>
<dbReference type="EMBL" id="AE001363">
    <property type="protein sequence ID" value="AAD18993.1"/>
    <property type="molecule type" value="Genomic_DNA"/>
</dbReference>
<dbReference type="EMBL" id="AE002161">
    <property type="protein sequence ID" value="AAF38792.1"/>
    <property type="molecule type" value="Genomic_DNA"/>
</dbReference>
<dbReference type="EMBL" id="BA000008">
    <property type="protein sequence ID" value="BAA99063.1"/>
    <property type="molecule type" value="Genomic_DNA"/>
</dbReference>
<dbReference type="EMBL" id="AE009440">
    <property type="protein sequence ID" value="AAP98813.1"/>
    <property type="molecule type" value="Genomic_DNA"/>
</dbReference>
<dbReference type="PIR" id="E86597">
    <property type="entry name" value="E86597"/>
</dbReference>
<dbReference type="PIR" id="G72024">
    <property type="entry name" value="G72024"/>
</dbReference>
<dbReference type="RefSeq" id="NP_225050.1">
    <property type="nucleotide sequence ID" value="NC_000922.1"/>
</dbReference>
<dbReference type="RefSeq" id="WP_010883490.1">
    <property type="nucleotide sequence ID" value="NZ_LN847257.1"/>
</dbReference>
<dbReference type="SMR" id="Q9Z751"/>
<dbReference type="STRING" id="406984.CPK_ORF00261"/>
<dbReference type="GeneID" id="45050908"/>
<dbReference type="KEGG" id="cpa:CP_1014"/>
<dbReference type="KEGG" id="cpj:gpdA"/>
<dbReference type="KEGG" id="cpn:CPn_0855"/>
<dbReference type="KEGG" id="cpt:CpB0884"/>
<dbReference type="PATRIC" id="fig|115713.3.peg.935"/>
<dbReference type="eggNOG" id="COG0240">
    <property type="taxonomic scope" value="Bacteria"/>
</dbReference>
<dbReference type="HOGENOM" id="CLU_033449_0_2_0"/>
<dbReference type="OrthoDB" id="9812273at2"/>
<dbReference type="UniPathway" id="UPA00940"/>
<dbReference type="Proteomes" id="UP000000583">
    <property type="component" value="Chromosome"/>
</dbReference>
<dbReference type="Proteomes" id="UP000000801">
    <property type="component" value="Chromosome"/>
</dbReference>
<dbReference type="GO" id="GO:0005829">
    <property type="term" value="C:cytosol"/>
    <property type="evidence" value="ECO:0007669"/>
    <property type="project" value="TreeGrafter"/>
</dbReference>
<dbReference type="GO" id="GO:0047952">
    <property type="term" value="F:glycerol-3-phosphate dehydrogenase [NAD(P)+] activity"/>
    <property type="evidence" value="ECO:0007669"/>
    <property type="project" value="UniProtKB-UniRule"/>
</dbReference>
<dbReference type="GO" id="GO:0051287">
    <property type="term" value="F:NAD binding"/>
    <property type="evidence" value="ECO:0007669"/>
    <property type="project" value="InterPro"/>
</dbReference>
<dbReference type="GO" id="GO:0005975">
    <property type="term" value="P:carbohydrate metabolic process"/>
    <property type="evidence" value="ECO:0007669"/>
    <property type="project" value="InterPro"/>
</dbReference>
<dbReference type="GO" id="GO:0046167">
    <property type="term" value="P:glycerol-3-phosphate biosynthetic process"/>
    <property type="evidence" value="ECO:0007669"/>
    <property type="project" value="UniProtKB-UniRule"/>
</dbReference>
<dbReference type="GO" id="GO:0046168">
    <property type="term" value="P:glycerol-3-phosphate catabolic process"/>
    <property type="evidence" value="ECO:0007669"/>
    <property type="project" value="InterPro"/>
</dbReference>
<dbReference type="GO" id="GO:0006650">
    <property type="term" value="P:glycerophospholipid metabolic process"/>
    <property type="evidence" value="ECO:0007669"/>
    <property type="project" value="UniProtKB-UniRule"/>
</dbReference>
<dbReference type="GO" id="GO:0008654">
    <property type="term" value="P:phospholipid biosynthetic process"/>
    <property type="evidence" value="ECO:0007669"/>
    <property type="project" value="UniProtKB-KW"/>
</dbReference>
<dbReference type="FunFam" id="1.10.1040.10:FF:000001">
    <property type="entry name" value="Glycerol-3-phosphate dehydrogenase [NAD(P)+]"/>
    <property type="match status" value="1"/>
</dbReference>
<dbReference type="Gene3D" id="1.10.1040.10">
    <property type="entry name" value="N-(1-d-carboxylethyl)-l-norvaline Dehydrogenase, domain 2"/>
    <property type="match status" value="1"/>
</dbReference>
<dbReference type="Gene3D" id="3.40.50.720">
    <property type="entry name" value="NAD(P)-binding Rossmann-like Domain"/>
    <property type="match status" value="1"/>
</dbReference>
<dbReference type="HAMAP" id="MF_00394">
    <property type="entry name" value="NAD_Glyc3P_dehydrog"/>
    <property type="match status" value="1"/>
</dbReference>
<dbReference type="InterPro" id="IPR008927">
    <property type="entry name" value="6-PGluconate_DH-like_C_sf"/>
</dbReference>
<dbReference type="InterPro" id="IPR013328">
    <property type="entry name" value="6PGD_dom2"/>
</dbReference>
<dbReference type="InterPro" id="IPR006168">
    <property type="entry name" value="G3P_DH_NAD-dep"/>
</dbReference>
<dbReference type="InterPro" id="IPR006109">
    <property type="entry name" value="G3P_DH_NAD-dep_C"/>
</dbReference>
<dbReference type="InterPro" id="IPR011128">
    <property type="entry name" value="G3P_DH_NAD-dep_N"/>
</dbReference>
<dbReference type="InterPro" id="IPR036291">
    <property type="entry name" value="NAD(P)-bd_dom_sf"/>
</dbReference>
<dbReference type="NCBIfam" id="NF000940">
    <property type="entry name" value="PRK00094.1-2"/>
    <property type="match status" value="1"/>
</dbReference>
<dbReference type="NCBIfam" id="NF000942">
    <property type="entry name" value="PRK00094.1-4"/>
    <property type="match status" value="1"/>
</dbReference>
<dbReference type="PANTHER" id="PTHR11728">
    <property type="entry name" value="GLYCEROL-3-PHOSPHATE DEHYDROGENASE"/>
    <property type="match status" value="1"/>
</dbReference>
<dbReference type="PANTHER" id="PTHR11728:SF1">
    <property type="entry name" value="GLYCEROL-3-PHOSPHATE DEHYDROGENASE [NAD(+)] 2, CHLOROPLASTIC"/>
    <property type="match status" value="1"/>
</dbReference>
<dbReference type="Pfam" id="PF07479">
    <property type="entry name" value="NAD_Gly3P_dh_C"/>
    <property type="match status" value="1"/>
</dbReference>
<dbReference type="Pfam" id="PF01210">
    <property type="entry name" value="NAD_Gly3P_dh_N"/>
    <property type="match status" value="1"/>
</dbReference>
<dbReference type="PIRSF" id="PIRSF000114">
    <property type="entry name" value="Glycerol-3-P_dh"/>
    <property type="match status" value="1"/>
</dbReference>
<dbReference type="PRINTS" id="PR00077">
    <property type="entry name" value="GPDHDRGNASE"/>
</dbReference>
<dbReference type="SUPFAM" id="SSF48179">
    <property type="entry name" value="6-phosphogluconate dehydrogenase C-terminal domain-like"/>
    <property type="match status" value="1"/>
</dbReference>
<dbReference type="SUPFAM" id="SSF51735">
    <property type="entry name" value="NAD(P)-binding Rossmann-fold domains"/>
    <property type="match status" value="1"/>
</dbReference>
<dbReference type="PROSITE" id="PS00957">
    <property type="entry name" value="NAD_G3PDH"/>
    <property type="match status" value="1"/>
</dbReference>
<sequence length="334" mass="36161">MKQHIGYLGMGIWGFCLASLLANKGYPVVAWSRNPDLIKQLQEERRHPLAPNVVISPNLSFTTDMKEAIHNAFMIVEGVTSAGIRPVAEQLKQITDLSVPFVITSKGIEQNTGLLLSEIMLEVLGDSVTPYLGYLSGPSIAKEVLNGSPCSVVVSAYDSQTLKQIHEAFSLPTFRVYPNTDIKGAALGGALKNVIAIACGIAEGLSFGNNAKAGLVTRGLHEMRKLAAIMDCKPETLNGLAGLGDLCVTCFSESSRNLRFGHLLAQGLTFEQAKAKIGMVVEGAYTALSAYQVAKHHKIDMPITTGIYRVLYENLDLKEGIALLLQRNTKEEFL</sequence>
<keyword id="KW-0963">Cytoplasm</keyword>
<keyword id="KW-0444">Lipid biosynthesis</keyword>
<keyword id="KW-0443">Lipid metabolism</keyword>
<keyword id="KW-0520">NAD</keyword>
<keyword id="KW-0521">NADP</keyword>
<keyword id="KW-0547">Nucleotide-binding</keyword>
<keyword id="KW-0560">Oxidoreductase</keyword>
<keyword id="KW-0594">Phospholipid biosynthesis</keyword>
<keyword id="KW-1208">Phospholipid metabolism</keyword>
<protein>
    <recommendedName>
        <fullName evidence="1">Glycerol-3-phosphate dehydrogenase [NAD(P)+]</fullName>
        <ecNumber evidence="1">1.1.1.94</ecNumber>
    </recommendedName>
    <alternativeName>
        <fullName evidence="1">NAD(P)(+)-dependent glycerol-3-phosphate dehydrogenase</fullName>
    </alternativeName>
    <alternativeName>
        <fullName evidence="1">NAD(P)H-dependent dihydroxyacetone-phosphate reductase</fullName>
    </alternativeName>
</protein>
<evidence type="ECO:0000255" key="1">
    <source>
        <dbReference type="HAMAP-Rule" id="MF_00394"/>
    </source>
</evidence>
<accession>Q9Z751</accession>
<name>GPDA_CHLPN</name>
<comment type="function">
    <text evidence="1">Catalyzes the reduction of the glycolytic intermediate dihydroxyacetone phosphate (DHAP) to sn-glycerol 3-phosphate (G3P), the key precursor for phospholipid synthesis.</text>
</comment>
<comment type="catalytic activity">
    <reaction evidence="1">
        <text>sn-glycerol 3-phosphate + NAD(+) = dihydroxyacetone phosphate + NADH + H(+)</text>
        <dbReference type="Rhea" id="RHEA:11092"/>
        <dbReference type="ChEBI" id="CHEBI:15378"/>
        <dbReference type="ChEBI" id="CHEBI:57540"/>
        <dbReference type="ChEBI" id="CHEBI:57597"/>
        <dbReference type="ChEBI" id="CHEBI:57642"/>
        <dbReference type="ChEBI" id="CHEBI:57945"/>
        <dbReference type="EC" id="1.1.1.94"/>
    </reaction>
    <physiologicalReaction direction="right-to-left" evidence="1">
        <dbReference type="Rhea" id="RHEA:11094"/>
    </physiologicalReaction>
</comment>
<comment type="catalytic activity">
    <reaction evidence="1">
        <text>sn-glycerol 3-phosphate + NADP(+) = dihydroxyacetone phosphate + NADPH + H(+)</text>
        <dbReference type="Rhea" id="RHEA:11096"/>
        <dbReference type="ChEBI" id="CHEBI:15378"/>
        <dbReference type="ChEBI" id="CHEBI:57597"/>
        <dbReference type="ChEBI" id="CHEBI:57642"/>
        <dbReference type="ChEBI" id="CHEBI:57783"/>
        <dbReference type="ChEBI" id="CHEBI:58349"/>
        <dbReference type="EC" id="1.1.1.94"/>
    </reaction>
    <physiologicalReaction direction="right-to-left" evidence="1">
        <dbReference type="Rhea" id="RHEA:11098"/>
    </physiologicalReaction>
</comment>
<comment type="pathway">
    <text evidence="1">Membrane lipid metabolism; glycerophospholipid metabolism.</text>
</comment>
<comment type="subcellular location">
    <subcellularLocation>
        <location evidence="1">Cytoplasm</location>
    </subcellularLocation>
</comment>
<comment type="similarity">
    <text evidence="1">Belongs to the NAD-dependent glycerol-3-phosphate dehydrogenase family.</text>
</comment>
<gene>
    <name evidence="1" type="primary">gpsA</name>
    <name type="ordered locus">CPn_0855</name>
    <name type="ordered locus">CP_1014</name>
    <name type="ordered locus">CpB0884</name>
</gene>
<proteinExistence type="inferred from homology"/>
<reference key="1">
    <citation type="journal article" date="1999" name="Nat. Genet.">
        <title>Comparative genomes of Chlamydia pneumoniae and C. trachomatis.</title>
        <authorList>
            <person name="Kalman S."/>
            <person name="Mitchell W.P."/>
            <person name="Marathe R."/>
            <person name="Lammel C.J."/>
            <person name="Fan J."/>
            <person name="Hyman R.W."/>
            <person name="Olinger L."/>
            <person name="Grimwood J."/>
            <person name="Davis R.W."/>
            <person name="Stephens R.S."/>
        </authorList>
    </citation>
    <scope>NUCLEOTIDE SEQUENCE [LARGE SCALE GENOMIC DNA]</scope>
    <source>
        <strain>CWL029</strain>
    </source>
</reference>
<reference key="2">
    <citation type="journal article" date="2000" name="Nucleic Acids Res.">
        <title>Genome sequences of Chlamydia trachomatis MoPn and Chlamydia pneumoniae AR39.</title>
        <authorList>
            <person name="Read T.D."/>
            <person name="Brunham R.C."/>
            <person name="Shen C."/>
            <person name="Gill S.R."/>
            <person name="Heidelberg J.F."/>
            <person name="White O."/>
            <person name="Hickey E.K."/>
            <person name="Peterson J.D."/>
            <person name="Utterback T.R."/>
            <person name="Berry K.J."/>
            <person name="Bass S."/>
            <person name="Linher K.D."/>
            <person name="Weidman J.F."/>
            <person name="Khouri H.M."/>
            <person name="Craven B."/>
            <person name="Bowman C."/>
            <person name="Dodson R.J."/>
            <person name="Gwinn M.L."/>
            <person name="Nelson W.C."/>
            <person name="DeBoy R.T."/>
            <person name="Kolonay J.F."/>
            <person name="McClarty G."/>
            <person name="Salzberg S.L."/>
            <person name="Eisen J.A."/>
            <person name="Fraser C.M."/>
        </authorList>
    </citation>
    <scope>NUCLEOTIDE SEQUENCE [LARGE SCALE GENOMIC DNA]</scope>
    <source>
        <strain>AR39</strain>
    </source>
</reference>
<reference key="3">
    <citation type="journal article" date="2000" name="Nucleic Acids Res.">
        <title>Comparison of whole genome sequences of Chlamydia pneumoniae J138 from Japan and CWL029 from USA.</title>
        <authorList>
            <person name="Shirai M."/>
            <person name="Hirakawa H."/>
            <person name="Kimoto M."/>
            <person name="Tabuchi M."/>
            <person name="Kishi F."/>
            <person name="Ouchi K."/>
            <person name="Shiba T."/>
            <person name="Ishii K."/>
            <person name="Hattori M."/>
            <person name="Kuhara S."/>
            <person name="Nakazawa T."/>
        </authorList>
    </citation>
    <scope>NUCLEOTIDE SEQUENCE [LARGE SCALE GENOMIC DNA]</scope>
    <source>
        <strain>J138</strain>
    </source>
</reference>
<reference key="4">
    <citation type="submission" date="2002-05" db="EMBL/GenBank/DDBJ databases">
        <title>The genome sequence of Chlamydia pneumoniae TW183 and comparison with other Chlamydia strains based on whole genome sequence analysis.</title>
        <authorList>
            <person name="Geng M.M."/>
            <person name="Schuhmacher A."/>
            <person name="Muehldorfer I."/>
            <person name="Bensch K.W."/>
            <person name="Schaefer K.P."/>
            <person name="Schneider S."/>
            <person name="Pohl T."/>
            <person name="Essig A."/>
            <person name="Marre R."/>
            <person name="Melchers K."/>
        </authorList>
    </citation>
    <scope>NUCLEOTIDE SEQUENCE [LARGE SCALE GENOMIC DNA]</scope>
    <source>
        <strain>TW-183</strain>
    </source>
</reference>
<organism>
    <name type="scientific">Chlamydia pneumoniae</name>
    <name type="common">Chlamydophila pneumoniae</name>
    <dbReference type="NCBI Taxonomy" id="83558"/>
    <lineage>
        <taxon>Bacteria</taxon>
        <taxon>Pseudomonadati</taxon>
        <taxon>Chlamydiota</taxon>
        <taxon>Chlamydiia</taxon>
        <taxon>Chlamydiales</taxon>
        <taxon>Chlamydiaceae</taxon>
        <taxon>Chlamydia/Chlamydophila group</taxon>
        <taxon>Chlamydia</taxon>
    </lineage>
</organism>